<feature type="chain" id="PRO_0000319612" description="Flagellar transcriptional regulator FtcR">
    <location>
        <begin position="1"/>
        <end position="227"/>
    </location>
</feature>
<feature type="domain" description="Response regulatory" evidence="1">
    <location>
        <begin position="1"/>
        <end position="116"/>
    </location>
</feature>
<feature type="DNA-binding region" description="OmpR/PhoB-type" evidence="2">
    <location>
        <begin position="127"/>
        <end position="226"/>
    </location>
</feature>
<reference key="1">
    <citation type="journal article" date="2002" name="Proc. Natl. Acad. Sci. U.S.A.">
        <title>The genome sequence of the facultative intracellular pathogen Brucella melitensis.</title>
        <authorList>
            <person name="DelVecchio V.G."/>
            <person name="Kapatral V."/>
            <person name="Redkar R.J."/>
            <person name="Patra G."/>
            <person name="Mujer C."/>
            <person name="Los T."/>
            <person name="Ivanova N."/>
            <person name="Anderson I."/>
            <person name="Bhattacharyya A."/>
            <person name="Lykidis A."/>
            <person name="Reznik G."/>
            <person name="Jablonski L."/>
            <person name="Larsen N."/>
            <person name="D'Souza M."/>
            <person name="Bernal A."/>
            <person name="Mazur M."/>
            <person name="Goltsman E."/>
            <person name="Selkov E."/>
            <person name="Elzer P.H."/>
            <person name="Hagius S."/>
            <person name="O'Callaghan D."/>
            <person name="Letesson J.-J."/>
            <person name="Haselkorn R."/>
            <person name="Kyrpides N.C."/>
            <person name="Overbeek R."/>
        </authorList>
    </citation>
    <scope>NUCLEOTIDE SEQUENCE [LARGE SCALE GENOMIC DNA]</scope>
    <source>
        <strain>ATCC 23456 / CCUG 17765 / NCTC 10094 / 16M</strain>
    </source>
</reference>
<reference key="2">
    <citation type="journal article" date="2007" name="J. Bacteriol.">
        <title>FtcR is a new master regulator of the flagellar system of Brucella melitensis 16M with homologs in Rhizobiaceae.</title>
        <authorList>
            <person name="Leonard S."/>
            <person name="Ferooz J."/>
            <person name="Haine V."/>
            <person name="Danese I."/>
            <person name="Fretin D."/>
            <person name="Tibor A."/>
            <person name="de Walque S."/>
            <person name="De Bolle X."/>
            <person name="Letesson J.-J."/>
        </authorList>
    </citation>
    <scope>FUNCTION IN REGULATION OF FLAGELLAR GENES</scope>
    <scope>INTERACTION WITH VJBR</scope>
    <scope>DISRUPTION PHENOTYPE</scope>
    <source>
        <strain>ATCC 23456 / CCUG 17765 / NCTC 10094 / 16M</strain>
    </source>
</reference>
<dbReference type="EMBL" id="AE008918">
    <property type="protein sequence ID" value="AAL53399.1"/>
    <property type="molecule type" value="Genomic_DNA"/>
</dbReference>
<dbReference type="PIR" id="AD3529">
    <property type="entry name" value="AD3529"/>
</dbReference>
<dbReference type="RefSeq" id="WP_002966643.1">
    <property type="nucleotide sequence ID" value="NZ_GG703779.1"/>
</dbReference>
<dbReference type="SMR" id="Q8YDL7"/>
<dbReference type="KEGG" id="bme:BMEII0158"/>
<dbReference type="KEGG" id="bmel:DK63_3087"/>
<dbReference type="PATRIC" id="fig|224914.52.peg.3231"/>
<dbReference type="eggNOG" id="COG0745">
    <property type="taxonomic scope" value="Bacteria"/>
</dbReference>
<dbReference type="PhylomeDB" id="Q8YDL7"/>
<dbReference type="PRO" id="PR:Q8YDL7"/>
<dbReference type="Proteomes" id="UP000000419">
    <property type="component" value="Chromosome II"/>
</dbReference>
<dbReference type="GO" id="GO:0005829">
    <property type="term" value="C:cytosol"/>
    <property type="evidence" value="ECO:0007669"/>
    <property type="project" value="TreeGrafter"/>
</dbReference>
<dbReference type="GO" id="GO:0032993">
    <property type="term" value="C:protein-DNA complex"/>
    <property type="evidence" value="ECO:0007669"/>
    <property type="project" value="TreeGrafter"/>
</dbReference>
<dbReference type="GO" id="GO:0000156">
    <property type="term" value="F:phosphorelay response regulator activity"/>
    <property type="evidence" value="ECO:0007669"/>
    <property type="project" value="TreeGrafter"/>
</dbReference>
<dbReference type="GO" id="GO:0000976">
    <property type="term" value="F:transcription cis-regulatory region binding"/>
    <property type="evidence" value="ECO:0007669"/>
    <property type="project" value="TreeGrafter"/>
</dbReference>
<dbReference type="GO" id="GO:0006355">
    <property type="term" value="P:regulation of DNA-templated transcription"/>
    <property type="evidence" value="ECO:0007669"/>
    <property type="project" value="InterPro"/>
</dbReference>
<dbReference type="CDD" id="cd00383">
    <property type="entry name" value="trans_reg_C"/>
    <property type="match status" value="1"/>
</dbReference>
<dbReference type="Gene3D" id="3.40.50.2300">
    <property type="match status" value="1"/>
</dbReference>
<dbReference type="Gene3D" id="1.10.10.10">
    <property type="entry name" value="Winged helix-like DNA-binding domain superfamily/Winged helix DNA-binding domain"/>
    <property type="match status" value="1"/>
</dbReference>
<dbReference type="InterPro" id="IPR011006">
    <property type="entry name" value="CheY-like_superfamily"/>
</dbReference>
<dbReference type="InterPro" id="IPR001867">
    <property type="entry name" value="OmpR/PhoB-type_DNA-bd"/>
</dbReference>
<dbReference type="InterPro" id="IPR016032">
    <property type="entry name" value="Sig_transdc_resp-reg_C-effctor"/>
</dbReference>
<dbReference type="InterPro" id="IPR001789">
    <property type="entry name" value="Sig_transdc_resp-reg_receiver"/>
</dbReference>
<dbReference type="InterPro" id="IPR039420">
    <property type="entry name" value="WalR-like"/>
</dbReference>
<dbReference type="InterPro" id="IPR036388">
    <property type="entry name" value="WH-like_DNA-bd_sf"/>
</dbReference>
<dbReference type="PANTHER" id="PTHR48111">
    <property type="entry name" value="REGULATOR OF RPOS"/>
    <property type="match status" value="1"/>
</dbReference>
<dbReference type="PANTHER" id="PTHR48111:SF67">
    <property type="entry name" value="TRANSCRIPTIONAL REGULATORY PROTEIN TCTD"/>
    <property type="match status" value="1"/>
</dbReference>
<dbReference type="Pfam" id="PF00486">
    <property type="entry name" value="Trans_reg_C"/>
    <property type="match status" value="1"/>
</dbReference>
<dbReference type="SMART" id="SM00862">
    <property type="entry name" value="Trans_reg_C"/>
    <property type="match status" value="1"/>
</dbReference>
<dbReference type="SUPFAM" id="SSF46894">
    <property type="entry name" value="C-terminal effector domain of the bipartite response regulators"/>
    <property type="match status" value="1"/>
</dbReference>
<dbReference type="SUPFAM" id="SSF52172">
    <property type="entry name" value="CheY-like"/>
    <property type="match status" value="1"/>
</dbReference>
<dbReference type="PROSITE" id="PS51755">
    <property type="entry name" value="OMPR_PHOB"/>
    <property type="match status" value="1"/>
</dbReference>
<dbReference type="PROSITE" id="PS50110">
    <property type="entry name" value="RESPONSE_REGULATORY"/>
    <property type="match status" value="1"/>
</dbReference>
<gene>
    <name type="primary">ftcR</name>
    <name type="ordered locus">BMEII0158</name>
</gene>
<keyword id="KW-0238">DNA-binding</keyword>
<keyword id="KW-0804">Transcription</keyword>
<keyword id="KW-0805">Transcription regulation</keyword>
<sequence>MIVVVDDRDMVTEGYSSWFGREGITTTGFTPTDFDEWVESVPEQDIMAIEAFLIGECADQHRLPARIRERCKAPVIAVNDRPSLEHTLELFQSGVDDVVRKPVHVREILARINAIRRRAGASATSGADGTQLGPIRVFSDGRDPQINGIDFPLPRRERRILEYLIANRGRRLNKVQIFSAIYGIFDSEVEENVVESHISKLRKKLRGQLGFDPIDSKRFLGYCINIE</sequence>
<evidence type="ECO:0000255" key="1">
    <source>
        <dbReference type="PROSITE-ProRule" id="PRU00169"/>
    </source>
</evidence>
<evidence type="ECO:0000255" key="2">
    <source>
        <dbReference type="PROSITE-ProRule" id="PRU01091"/>
    </source>
</evidence>
<evidence type="ECO:0000269" key="3">
    <source>
    </source>
</evidence>
<evidence type="ECO:0000305" key="4"/>
<protein>
    <recommendedName>
        <fullName>Flagellar transcriptional regulator FtcR</fullName>
    </recommendedName>
</protein>
<name>FTCR_BRUME</name>
<accession>Q8YDL7</accession>
<organism>
    <name type="scientific">Brucella melitensis biotype 1 (strain ATCC 23456 / CCUG 17765 / NCTC 10094 / 16M)</name>
    <dbReference type="NCBI Taxonomy" id="224914"/>
    <lineage>
        <taxon>Bacteria</taxon>
        <taxon>Pseudomonadati</taxon>
        <taxon>Pseudomonadota</taxon>
        <taxon>Alphaproteobacteria</taxon>
        <taxon>Hyphomicrobiales</taxon>
        <taxon>Brucellaceae</taxon>
        <taxon>Brucella/Ochrobactrum group</taxon>
        <taxon>Brucella</taxon>
    </lineage>
</organism>
<comment type="function">
    <text evidence="3">Required for transcription of the fliF gene during vegetative and intracellular growth and for production of the two flagellar components flgE and fliC during vegetative growth. Specifically binds to the fliF promoter region. Could mediate the action of VjbR on flagellar gene expression.</text>
</comment>
<comment type="disruption phenotype">
    <text evidence="3">Inactivation of the ftcR gene down-regulates the activity of the fliF promoter region and the production of both flgE and fliC proteins during vegetative growth or during macrophage infection. This mutant also lacks the flagellar structures under growth conditions in which the wild-type strain is flagellated. The mutant is not attenuated in cellular infection models but exhibits a marked virulence defect after 4 weeks or more of infection in mice.</text>
</comment>
<comment type="miscellaneous">
    <text>There is no cognate histidine kinase partner identified so far for FtcR.</text>
</comment>
<comment type="caution">
    <text evidence="4">Lacks the conserved Asp residue in position 50 usually required for phosphorylation. The Glu residue in position 50 may mimic constitutive phosphorylation and allow FtcR to bypass the requirement for phosphorylation.</text>
</comment>
<proteinExistence type="evidence at protein level"/>